<dbReference type="EMBL" id="CP000436">
    <property type="protein sequence ID" value="ABI24345.1"/>
    <property type="molecule type" value="Genomic_DNA"/>
</dbReference>
<dbReference type="SMR" id="Q0I158"/>
<dbReference type="KEGG" id="hso:HS_0064"/>
<dbReference type="eggNOG" id="COG0091">
    <property type="taxonomic scope" value="Bacteria"/>
</dbReference>
<dbReference type="HOGENOM" id="CLU_083987_3_3_6"/>
<dbReference type="GO" id="GO:0022625">
    <property type="term" value="C:cytosolic large ribosomal subunit"/>
    <property type="evidence" value="ECO:0007669"/>
    <property type="project" value="TreeGrafter"/>
</dbReference>
<dbReference type="GO" id="GO:0019843">
    <property type="term" value="F:rRNA binding"/>
    <property type="evidence" value="ECO:0007669"/>
    <property type="project" value="UniProtKB-UniRule"/>
</dbReference>
<dbReference type="GO" id="GO:0003735">
    <property type="term" value="F:structural constituent of ribosome"/>
    <property type="evidence" value="ECO:0007669"/>
    <property type="project" value="InterPro"/>
</dbReference>
<dbReference type="GO" id="GO:0006412">
    <property type="term" value="P:translation"/>
    <property type="evidence" value="ECO:0007669"/>
    <property type="project" value="UniProtKB-UniRule"/>
</dbReference>
<dbReference type="CDD" id="cd00336">
    <property type="entry name" value="Ribosomal_L22"/>
    <property type="match status" value="1"/>
</dbReference>
<dbReference type="FunFam" id="3.90.470.10:FF:000001">
    <property type="entry name" value="50S ribosomal protein L22"/>
    <property type="match status" value="1"/>
</dbReference>
<dbReference type="Gene3D" id="3.90.470.10">
    <property type="entry name" value="Ribosomal protein L22/L17"/>
    <property type="match status" value="1"/>
</dbReference>
<dbReference type="HAMAP" id="MF_01331_B">
    <property type="entry name" value="Ribosomal_uL22_B"/>
    <property type="match status" value="1"/>
</dbReference>
<dbReference type="InterPro" id="IPR001063">
    <property type="entry name" value="Ribosomal_uL22"/>
</dbReference>
<dbReference type="InterPro" id="IPR005727">
    <property type="entry name" value="Ribosomal_uL22_bac/chlpt-type"/>
</dbReference>
<dbReference type="InterPro" id="IPR047867">
    <property type="entry name" value="Ribosomal_uL22_bac/org-type"/>
</dbReference>
<dbReference type="InterPro" id="IPR018260">
    <property type="entry name" value="Ribosomal_uL22_CS"/>
</dbReference>
<dbReference type="InterPro" id="IPR036394">
    <property type="entry name" value="Ribosomal_uL22_sf"/>
</dbReference>
<dbReference type="NCBIfam" id="TIGR01044">
    <property type="entry name" value="rplV_bact"/>
    <property type="match status" value="1"/>
</dbReference>
<dbReference type="PANTHER" id="PTHR13501">
    <property type="entry name" value="CHLOROPLAST 50S RIBOSOMAL PROTEIN L22-RELATED"/>
    <property type="match status" value="1"/>
</dbReference>
<dbReference type="PANTHER" id="PTHR13501:SF8">
    <property type="entry name" value="LARGE RIBOSOMAL SUBUNIT PROTEIN UL22M"/>
    <property type="match status" value="1"/>
</dbReference>
<dbReference type="Pfam" id="PF00237">
    <property type="entry name" value="Ribosomal_L22"/>
    <property type="match status" value="1"/>
</dbReference>
<dbReference type="SUPFAM" id="SSF54843">
    <property type="entry name" value="Ribosomal protein L22"/>
    <property type="match status" value="1"/>
</dbReference>
<dbReference type="PROSITE" id="PS00464">
    <property type="entry name" value="RIBOSOMAL_L22"/>
    <property type="match status" value="1"/>
</dbReference>
<proteinExistence type="inferred from homology"/>
<organism>
    <name type="scientific">Histophilus somni (strain 129Pt)</name>
    <name type="common">Haemophilus somnus</name>
    <dbReference type="NCBI Taxonomy" id="205914"/>
    <lineage>
        <taxon>Bacteria</taxon>
        <taxon>Pseudomonadati</taxon>
        <taxon>Pseudomonadota</taxon>
        <taxon>Gammaproteobacteria</taxon>
        <taxon>Pasteurellales</taxon>
        <taxon>Pasteurellaceae</taxon>
        <taxon>Histophilus</taxon>
    </lineage>
</organism>
<sequence length="110" mass="12134">METIAKHRYARTSAQKARLVADLVRGKKVAQALEILTFTNKKAAALVKKVLESAIANAEHNDGADIDDLKVAKIFVDEGPSMKRVMPRAKGRADRILKRTSHITVVVSDR</sequence>
<name>RL22_HISS1</name>
<accession>Q0I158</accession>
<evidence type="ECO:0000255" key="1">
    <source>
        <dbReference type="HAMAP-Rule" id="MF_01331"/>
    </source>
</evidence>
<evidence type="ECO:0000305" key="2"/>
<feature type="chain" id="PRO_1000052579" description="Large ribosomal subunit protein uL22">
    <location>
        <begin position="1"/>
        <end position="110"/>
    </location>
</feature>
<protein>
    <recommendedName>
        <fullName evidence="1">Large ribosomal subunit protein uL22</fullName>
    </recommendedName>
    <alternativeName>
        <fullName evidence="2">50S ribosomal protein L22</fullName>
    </alternativeName>
</protein>
<comment type="function">
    <text evidence="1">This protein binds specifically to 23S rRNA; its binding is stimulated by other ribosomal proteins, e.g. L4, L17, and L20. It is important during the early stages of 50S assembly. It makes multiple contacts with different domains of the 23S rRNA in the assembled 50S subunit and ribosome (By similarity).</text>
</comment>
<comment type="function">
    <text evidence="1">The globular domain of the protein is located near the polypeptide exit tunnel on the outside of the subunit, while an extended beta-hairpin is found that lines the wall of the exit tunnel in the center of the 70S ribosome.</text>
</comment>
<comment type="subunit">
    <text evidence="1">Part of the 50S ribosomal subunit.</text>
</comment>
<comment type="similarity">
    <text evidence="1">Belongs to the universal ribosomal protein uL22 family.</text>
</comment>
<reference key="1">
    <citation type="journal article" date="2007" name="J. Bacteriol.">
        <title>Complete genome sequence of Haemophilus somnus (Histophilus somni) strain 129Pt and comparison to Haemophilus ducreyi 35000HP and Haemophilus influenzae Rd.</title>
        <authorList>
            <person name="Challacombe J.F."/>
            <person name="Duncan A.J."/>
            <person name="Brettin T.S."/>
            <person name="Bruce D."/>
            <person name="Chertkov O."/>
            <person name="Detter J.C."/>
            <person name="Han C.S."/>
            <person name="Misra M."/>
            <person name="Richardson P."/>
            <person name="Tapia R."/>
            <person name="Thayer N."/>
            <person name="Xie G."/>
            <person name="Inzana T.J."/>
        </authorList>
    </citation>
    <scope>NUCLEOTIDE SEQUENCE [LARGE SCALE GENOMIC DNA]</scope>
    <source>
        <strain>129Pt</strain>
    </source>
</reference>
<gene>
    <name evidence="1" type="primary">rplV</name>
    <name type="ordered locus">HS_0064</name>
</gene>
<keyword id="KW-0687">Ribonucleoprotein</keyword>
<keyword id="KW-0689">Ribosomal protein</keyword>
<keyword id="KW-0694">RNA-binding</keyword>
<keyword id="KW-0699">rRNA-binding</keyword>